<organism>
    <name type="scientific">Francisella tularensis subsp. holarctica (strain FTNF002-00 / FTA)</name>
    <dbReference type="NCBI Taxonomy" id="458234"/>
    <lineage>
        <taxon>Bacteria</taxon>
        <taxon>Pseudomonadati</taxon>
        <taxon>Pseudomonadota</taxon>
        <taxon>Gammaproteobacteria</taxon>
        <taxon>Thiotrichales</taxon>
        <taxon>Francisellaceae</taxon>
        <taxon>Francisella</taxon>
    </lineage>
</organism>
<name>HEM6_FRATF</name>
<evidence type="ECO:0000255" key="1">
    <source>
        <dbReference type="HAMAP-Rule" id="MF_00333"/>
    </source>
</evidence>
<keyword id="KW-0963">Cytoplasm</keyword>
<keyword id="KW-0350">Heme biosynthesis</keyword>
<keyword id="KW-0479">Metal-binding</keyword>
<keyword id="KW-0560">Oxidoreductase</keyword>
<keyword id="KW-0627">Porphyrin biosynthesis</keyword>
<protein>
    <recommendedName>
        <fullName evidence="1">Oxygen-dependent coproporphyrinogen-III oxidase</fullName>
        <shortName evidence="1">CPO</shortName>
        <shortName evidence="1">Coprogen oxidase</shortName>
        <shortName evidence="1">Coproporphyrinogenase</shortName>
        <ecNumber evidence="1">1.3.3.3</ecNumber>
    </recommendedName>
</protein>
<proteinExistence type="inferred from homology"/>
<comment type="function">
    <text evidence="1">Involved in the heme biosynthesis. Catalyzes the aerobic oxidative decarboxylation of propionate groups of rings A and B of coproporphyrinogen-III to yield the vinyl groups in protoporphyrinogen-IX.</text>
</comment>
<comment type="catalytic activity">
    <reaction evidence="1">
        <text>coproporphyrinogen III + O2 + 2 H(+) = protoporphyrinogen IX + 2 CO2 + 2 H2O</text>
        <dbReference type="Rhea" id="RHEA:18257"/>
        <dbReference type="ChEBI" id="CHEBI:15377"/>
        <dbReference type="ChEBI" id="CHEBI:15378"/>
        <dbReference type="ChEBI" id="CHEBI:15379"/>
        <dbReference type="ChEBI" id="CHEBI:16526"/>
        <dbReference type="ChEBI" id="CHEBI:57307"/>
        <dbReference type="ChEBI" id="CHEBI:57309"/>
        <dbReference type="EC" id="1.3.3.3"/>
    </reaction>
</comment>
<comment type="cofactor">
    <cofactor evidence="1">
        <name>a divalent metal cation</name>
        <dbReference type="ChEBI" id="CHEBI:60240"/>
    </cofactor>
</comment>
<comment type="pathway">
    <text evidence="1">Porphyrin-containing compound metabolism; protoporphyrin-IX biosynthesis; protoporphyrinogen-IX from coproporphyrinogen-III (O2 route): step 1/1.</text>
</comment>
<comment type="subunit">
    <text evidence="1">Homodimer.</text>
</comment>
<comment type="subcellular location">
    <subcellularLocation>
        <location evidence="1">Cytoplasm</location>
    </subcellularLocation>
</comment>
<comment type="similarity">
    <text evidence="1">Belongs to the aerobic coproporphyrinogen-III oxidase family.</text>
</comment>
<reference key="1">
    <citation type="journal article" date="2009" name="PLoS ONE">
        <title>Complete genome sequence of Francisella tularensis subspecies holarctica FTNF002-00.</title>
        <authorList>
            <person name="Barabote R.D."/>
            <person name="Xie G."/>
            <person name="Brettin T.S."/>
            <person name="Hinrichs S.H."/>
            <person name="Fey P.D."/>
            <person name="Jay J.J."/>
            <person name="Engle J.L."/>
            <person name="Godbole S.D."/>
            <person name="Noronha J.M."/>
            <person name="Scheuermann R.H."/>
            <person name="Zhou L.W."/>
            <person name="Lion C."/>
            <person name="Dempsey M.P."/>
        </authorList>
    </citation>
    <scope>NUCLEOTIDE SEQUENCE [LARGE SCALE GENOMIC DNA]</scope>
    <source>
        <strain>FTNF002-00 / FTA</strain>
    </source>
</reference>
<dbReference type="EC" id="1.3.3.3" evidence="1"/>
<dbReference type="EMBL" id="CP000803">
    <property type="protein sequence ID" value="ABU61554.1"/>
    <property type="molecule type" value="Genomic_DNA"/>
</dbReference>
<dbReference type="RefSeq" id="WP_010030413.1">
    <property type="nucleotide sequence ID" value="NC_009749.1"/>
</dbReference>
<dbReference type="SMR" id="A7NC51"/>
<dbReference type="KEGG" id="fta:FTA_1078"/>
<dbReference type="HOGENOM" id="CLU_026169_0_1_6"/>
<dbReference type="UniPathway" id="UPA00251">
    <property type="reaction ID" value="UER00322"/>
</dbReference>
<dbReference type="GO" id="GO:0005737">
    <property type="term" value="C:cytoplasm"/>
    <property type="evidence" value="ECO:0007669"/>
    <property type="project" value="UniProtKB-SubCell"/>
</dbReference>
<dbReference type="GO" id="GO:0004109">
    <property type="term" value="F:coproporphyrinogen oxidase activity"/>
    <property type="evidence" value="ECO:0007669"/>
    <property type="project" value="UniProtKB-UniRule"/>
</dbReference>
<dbReference type="GO" id="GO:0046872">
    <property type="term" value="F:metal ion binding"/>
    <property type="evidence" value="ECO:0007669"/>
    <property type="project" value="UniProtKB-KW"/>
</dbReference>
<dbReference type="GO" id="GO:0042803">
    <property type="term" value="F:protein homodimerization activity"/>
    <property type="evidence" value="ECO:0000250"/>
    <property type="project" value="UniProtKB"/>
</dbReference>
<dbReference type="GO" id="GO:0006782">
    <property type="term" value="P:protoporphyrinogen IX biosynthetic process"/>
    <property type="evidence" value="ECO:0007669"/>
    <property type="project" value="UniProtKB-UniRule"/>
</dbReference>
<dbReference type="FunFam" id="3.40.1500.10:FF:000010">
    <property type="entry name" value="Oxygen-dependent coproporphyrinogen-III oxidase"/>
    <property type="match status" value="1"/>
</dbReference>
<dbReference type="Gene3D" id="3.40.1500.10">
    <property type="entry name" value="Coproporphyrinogen III oxidase, aerobic"/>
    <property type="match status" value="1"/>
</dbReference>
<dbReference type="HAMAP" id="MF_00333">
    <property type="entry name" value="Coprogen_oxidas"/>
    <property type="match status" value="1"/>
</dbReference>
<dbReference type="InterPro" id="IPR001260">
    <property type="entry name" value="Coprogen_oxidase_aer"/>
</dbReference>
<dbReference type="InterPro" id="IPR036406">
    <property type="entry name" value="Coprogen_oxidase_aer_sf"/>
</dbReference>
<dbReference type="InterPro" id="IPR018375">
    <property type="entry name" value="Coprogen_oxidase_CS"/>
</dbReference>
<dbReference type="NCBIfam" id="NF003727">
    <property type="entry name" value="PRK05330.1"/>
    <property type="match status" value="1"/>
</dbReference>
<dbReference type="PANTHER" id="PTHR10755">
    <property type="entry name" value="COPROPORPHYRINOGEN III OXIDASE, MITOCHONDRIAL"/>
    <property type="match status" value="1"/>
</dbReference>
<dbReference type="PANTHER" id="PTHR10755:SF0">
    <property type="entry name" value="OXYGEN-DEPENDENT COPROPORPHYRINOGEN-III OXIDASE, MITOCHONDRIAL"/>
    <property type="match status" value="1"/>
</dbReference>
<dbReference type="Pfam" id="PF01218">
    <property type="entry name" value="Coprogen_oxidas"/>
    <property type="match status" value="1"/>
</dbReference>
<dbReference type="PIRSF" id="PIRSF000166">
    <property type="entry name" value="Coproporphyri_ox"/>
    <property type="match status" value="1"/>
</dbReference>
<dbReference type="PRINTS" id="PR00073">
    <property type="entry name" value="COPRGNOXDASE"/>
</dbReference>
<dbReference type="SUPFAM" id="SSF102886">
    <property type="entry name" value="Coproporphyrinogen III oxidase"/>
    <property type="match status" value="1"/>
</dbReference>
<dbReference type="PROSITE" id="PS01021">
    <property type="entry name" value="COPROGEN_OXIDASE"/>
    <property type="match status" value="1"/>
</dbReference>
<accession>A7NC51</accession>
<sequence>MQEKISKFEDFLTQLQQNITTALEQHETNAAKFISDKWQKPDTPDQKLKGYGNSMIIEGGEIFEKGVVAFSRVHGSELPPFATAKRQELAGKSFIATGLSLVIHPRNPFVPTSHANFRIFIAGADTDNPIWWFGGGFDLTPYYPFEEDAIHWHQTAKNICDKHDKTYYPKFKKWCDEYFYLKHRDEYRGVGGLFFDDLNDKSFDECFNFVTDCANSYLDAYIPIVAQRKNIEYSQKHKDFQLYRRGRYVEFNLVFDRGTIFGLQSGGRTESILSSMPPMATWKYNWQPELGSEEEKVYQYIKPRDWIK</sequence>
<gene>
    <name evidence="1" type="primary">hemF</name>
    <name type="ordered locus">FTA_1078</name>
</gene>
<feature type="chain" id="PRO_1000133182" description="Oxygen-dependent coproporphyrinogen-III oxidase">
    <location>
        <begin position="1"/>
        <end position="308"/>
    </location>
</feature>
<feature type="region of interest" description="Important for dimerization" evidence="1">
    <location>
        <begin position="248"/>
        <end position="283"/>
    </location>
</feature>
<feature type="active site" description="Proton donor" evidence="1">
    <location>
        <position position="114"/>
    </location>
</feature>
<feature type="binding site" evidence="1">
    <location>
        <position position="100"/>
    </location>
    <ligand>
        <name>substrate</name>
    </ligand>
</feature>
<feature type="binding site" evidence="1">
    <location>
        <position position="104"/>
    </location>
    <ligand>
        <name>a divalent metal cation</name>
        <dbReference type="ChEBI" id="CHEBI:60240"/>
    </ligand>
</feature>
<feature type="binding site" evidence="1">
    <location>
        <position position="114"/>
    </location>
    <ligand>
        <name>a divalent metal cation</name>
        <dbReference type="ChEBI" id="CHEBI:60240"/>
    </ligand>
</feature>
<feature type="binding site" evidence="1">
    <location>
        <begin position="116"/>
        <end position="118"/>
    </location>
    <ligand>
        <name>substrate</name>
    </ligand>
</feature>
<feature type="binding site" evidence="1">
    <location>
        <position position="153"/>
    </location>
    <ligand>
        <name>a divalent metal cation</name>
        <dbReference type="ChEBI" id="CHEBI:60240"/>
    </ligand>
</feature>
<feature type="binding site" evidence="1">
    <location>
        <position position="183"/>
    </location>
    <ligand>
        <name>a divalent metal cation</name>
        <dbReference type="ChEBI" id="CHEBI:60240"/>
    </ligand>
</feature>
<feature type="binding site" evidence="1">
    <location>
        <begin position="266"/>
        <end position="268"/>
    </location>
    <ligand>
        <name>substrate</name>
    </ligand>
</feature>
<feature type="site" description="Important for dimerization" evidence="1">
    <location>
        <position position="183"/>
    </location>
</feature>